<keyword id="KW-0002">3D-structure</keyword>
<keyword id="KW-0010">Activator</keyword>
<keyword id="KW-0104">Cadmium</keyword>
<keyword id="KW-0963">Cytoplasm</keyword>
<keyword id="KW-0238">DNA-binding</keyword>
<keyword id="KW-0464">Manganese</keyword>
<keyword id="KW-0479">Metal-binding</keyword>
<keyword id="KW-1185">Reference proteome</keyword>
<keyword id="KW-0678">Repressor</keyword>
<keyword id="KW-0804">Transcription</keyword>
<keyword id="KW-0805">Transcription regulation</keyword>
<dbReference type="EMBL" id="D84432">
    <property type="protein sequence ID" value="BAA12551.1"/>
    <property type="molecule type" value="Genomic_DNA"/>
</dbReference>
<dbReference type="EMBL" id="AL009126">
    <property type="protein sequence ID" value="CAB14383.2"/>
    <property type="molecule type" value="Genomic_DNA"/>
</dbReference>
<dbReference type="PIR" id="E69959">
    <property type="entry name" value="E69959"/>
</dbReference>
<dbReference type="RefSeq" id="NP_390332.2">
    <property type="nucleotide sequence ID" value="NC_000964.3"/>
</dbReference>
<dbReference type="RefSeq" id="WP_003236923.1">
    <property type="nucleotide sequence ID" value="NZ_OZ025638.1"/>
</dbReference>
<dbReference type="PDB" id="1ON1">
    <property type="method" value="X-ray"/>
    <property type="resolution" value="1.75 A"/>
    <property type="chains" value="A/B=1-142"/>
</dbReference>
<dbReference type="PDB" id="1ON2">
    <property type="method" value="X-ray"/>
    <property type="resolution" value="1.61 A"/>
    <property type="chains" value="A/B=1-142"/>
</dbReference>
<dbReference type="PDB" id="2EV0">
    <property type="method" value="X-ray"/>
    <property type="resolution" value="1.65 A"/>
    <property type="chains" value="A/B=1-142"/>
</dbReference>
<dbReference type="PDB" id="2EV5">
    <property type="method" value="X-ray"/>
    <property type="resolution" value="2.00 A"/>
    <property type="chains" value="A/B=1-142"/>
</dbReference>
<dbReference type="PDB" id="2EV6">
    <property type="method" value="X-ray"/>
    <property type="resolution" value="1.70 A"/>
    <property type="chains" value="A/B=1-142"/>
</dbReference>
<dbReference type="PDB" id="2F5C">
    <property type="method" value="X-ray"/>
    <property type="resolution" value="2.40 A"/>
    <property type="chains" value="A=1-142"/>
</dbReference>
<dbReference type="PDB" id="2F5D">
    <property type="method" value="X-ray"/>
    <property type="resolution" value="1.90 A"/>
    <property type="chains" value="A/B=1-142"/>
</dbReference>
<dbReference type="PDB" id="2F5E">
    <property type="method" value="X-ray"/>
    <property type="resolution" value="2.20 A"/>
    <property type="chains" value="A/B=1-142"/>
</dbReference>
<dbReference type="PDB" id="2F5F">
    <property type="method" value="X-ray"/>
    <property type="resolution" value="2.40 A"/>
    <property type="chains" value="A/B=1-142"/>
</dbReference>
<dbReference type="PDB" id="2HYF">
    <property type="method" value="X-ray"/>
    <property type="resolution" value="2.80 A"/>
    <property type="chains" value="A/B/C/D=1-142"/>
</dbReference>
<dbReference type="PDB" id="2HYG">
    <property type="method" value="X-ray"/>
    <property type="resolution" value="2.80 A"/>
    <property type="chains" value="D=1-142"/>
</dbReference>
<dbReference type="PDB" id="3R60">
    <property type="method" value="X-ray"/>
    <property type="resolution" value="1.80 A"/>
    <property type="chains" value="A/B=2-142"/>
</dbReference>
<dbReference type="PDB" id="3R61">
    <property type="method" value="X-ray"/>
    <property type="resolution" value="1.90 A"/>
    <property type="chains" value="A/B=2-142"/>
</dbReference>
<dbReference type="PDB" id="4HV5">
    <property type="method" value="X-ray"/>
    <property type="resolution" value="1.90 A"/>
    <property type="chains" value="A/B=2-142"/>
</dbReference>
<dbReference type="PDB" id="4HV6">
    <property type="method" value="X-ray"/>
    <property type="resolution" value="2.30 A"/>
    <property type="chains" value="A/B=2-142"/>
</dbReference>
<dbReference type="PDB" id="4HX4">
    <property type="method" value="X-ray"/>
    <property type="resolution" value="1.65 A"/>
    <property type="chains" value="A/B=2-142"/>
</dbReference>
<dbReference type="PDB" id="4HX7">
    <property type="method" value="X-ray"/>
    <property type="resolution" value="1.90 A"/>
    <property type="chains" value="A/B=2-142"/>
</dbReference>
<dbReference type="PDB" id="4HX8">
    <property type="method" value="X-ray"/>
    <property type="resolution" value="2.00 A"/>
    <property type="chains" value="A/B=2-142"/>
</dbReference>
<dbReference type="PDB" id="9C4C">
    <property type="method" value="EM"/>
    <property type="resolution" value="3.09 A"/>
    <property type="chains" value="E/F/G/H=1-142"/>
</dbReference>
<dbReference type="PDB" id="9C4D">
    <property type="method" value="EM"/>
    <property type="resolution" value="4.17 A"/>
    <property type="chains" value="C/D/E/F/G/H/I/J=1-142"/>
</dbReference>
<dbReference type="PDBsum" id="1ON1"/>
<dbReference type="PDBsum" id="1ON2"/>
<dbReference type="PDBsum" id="2EV0"/>
<dbReference type="PDBsum" id="2EV5"/>
<dbReference type="PDBsum" id="2EV6"/>
<dbReference type="PDBsum" id="2F5C"/>
<dbReference type="PDBsum" id="2F5D"/>
<dbReference type="PDBsum" id="2F5E"/>
<dbReference type="PDBsum" id="2F5F"/>
<dbReference type="PDBsum" id="2HYF"/>
<dbReference type="PDBsum" id="2HYG"/>
<dbReference type="PDBsum" id="3R60"/>
<dbReference type="PDBsum" id="3R61"/>
<dbReference type="PDBsum" id="4HV5"/>
<dbReference type="PDBsum" id="4HV6"/>
<dbReference type="PDBsum" id="4HX4"/>
<dbReference type="PDBsum" id="4HX7"/>
<dbReference type="PDBsum" id="4HX8"/>
<dbReference type="PDBsum" id="9C4C"/>
<dbReference type="PDBsum" id="9C4D"/>
<dbReference type="EMDB" id="EMD-45181"/>
<dbReference type="EMDB" id="EMD-45182"/>
<dbReference type="SMR" id="P54512"/>
<dbReference type="FunCoup" id="P54512">
    <property type="interactions" value="58"/>
</dbReference>
<dbReference type="STRING" id="224308.BSU24520"/>
<dbReference type="PaxDb" id="224308-BSU24520"/>
<dbReference type="EnsemblBacteria" id="CAB14383">
    <property type="protein sequence ID" value="CAB14383"/>
    <property type="gene ID" value="BSU_24520"/>
</dbReference>
<dbReference type="GeneID" id="76978860"/>
<dbReference type="GeneID" id="938554"/>
<dbReference type="KEGG" id="bsu:BSU24520"/>
<dbReference type="PATRIC" id="fig|224308.179.peg.2670"/>
<dbReference type="eggNOG" id="COG1321">
    <property type="taxonomic scope" value="Bacteria"/>
</dbReference>
<dbReference type="InParanoid" id="P54512"/>
<dbReference type="OrthoDB" id="9791355at2"/>
<dbReference type="PhylomeDB" id="P54512"/>
<dbReference type="BioCyc" id="BSUB:BSU24520-MONOMER"/>
<dbReference type="EvolutionaryTrace" id="P54512"/>
<dbReference type="Proteomes" id="UP000001570">
    <property type="component" value="Chromosome"/>
</dbReference>
<dbReference type="GO" id="GO:0005737">
    <property type="term" value="C:cytoplasm"/>
    <property type="evidence" value="ECO:0007669"/>
    <property type="project" value="UniProtKB-SubCell"/>
</dbReference>
<dbReference type="GO" id="GO:0003677">
    <property type="term" value="F:DNA binding"/>
    <property type="evidence" value="ECO:0007669"/>
    <property type="project" value="UniProtKB-KW"/>
</dbReference>
<dbReference type="GO" id="GO:0003700">
    <property type="term" value="F:DNA-binding transcription factor activity"/>
    <property type="evidence" value="ECO:0007669"/>
    <property type="project" value="UniProtKB-UniRule"/>
</dbReference>
<dbReference type="GO" id="GO:0030145">
    <property type="term" value="F:manganese ion binding"/>
    <property type="evidence" value="ECO:0007669"/>
    <property type="project" value="UniProtKB-UniRule"/>
</dbReference>
<dbReference type="GO" id="GO:0046983">
    <property type="term" value="F:protein dimerization activity"/>
    <property type="evidence" value="ECO:0007669"/>
    <property type="project" value="InterPro"/>
</dbReference>
<dbReference type="GO" id="GO:0030026">
    <property type="term" value="P:intracellular manganese ion homeostasis"/>
    <property type="evidence" value="ECO:0007669"/>
    <property type="project" value="UniProtKB-UniRule"/>
</dbReference>
<dbReference type="FunFam" id="1.10.10.10:FF:000189">
    <property type="entry name" value="HTH-type transcriptional regulator MntR"/>
    <property type="match status" value="1"/>
</dbReference>
<dbReference type="FunFam" id="1.10.60.10:FF:000003">
    <property type="entry name" value="HTH-type transcriptional regulator MntR"/>
    <property type="match status" value="1"/>
</dbReference>
<dbReference type="Gene3D" id="1.10.60.10">
    <property type="entry name" value="Iron dependent repressor, metal binding and dimerisation domain"/>
    <property type="match status" value="1"/>
</dbReference>
<dbReference type="Gene3D" id="1.10.10.10">
    <property type="entry name" value="Winged helix-like DNA-binding domain superfamily/Winged helix DNA-binding domain"/>
    <property type="match status" value="1"/>
</dbReference>
<dbReference type="HAMAP" id="MF_00732">
    <property type="entry name" value="HTH_MntR"/>
    <property type="match status" value="1"/>
</dbReference>
<dbReference type="InterPro" id="IPR050536">
    <property type="entry name" value="DtxR_MntR_Metal-Reg"/>
</dbReference>
<dbReference type="InterPro" id="IPR001367">
    <property type="entry name" value="Fe_dep_repressor"/>
</dbReference>
<dbReference type="InterPro" id="IPR036421">
    <property type="entry name" value="Fe_dep_repressor_sf"/>
</dbReference>
<dbReference type="InterPro" id="IPR022687">
    <property type="entry name" value="HTH_DTXR"/>
</dbReference>
<dbReference type="InterPro" id="IPR022897">
    <property type="entry name" value="HTH_tscrpt_reg_MntR"/>
</dbReference>
<dbReference type="InterPro" id="IPR022689">
    <property type="entry name" value="Iron_dep_repressor"/>
</dbReference>
<dbReference type="InterPro" id="IPR036388">
    <property type="entry name" value="WH-like_DNA-bd_sf"/>
</dbReference>
<dbReference type="InterPro" id="IPR036390">
    <property type="entry name" value="WH_DNA-bd_sf"/>
</dbReference>
<dbReference type="NCBIfam" id="NF003025">
    <property type="entry name" value="PRK03902.1"/>
    <property type="match status" value="1"/>
</dbReference>
<dbReference type="PANTHER" id="PTHR33238">
    <property type="entry name" value="IRON (METAL) DEPENDENT REPRESSOR, DTXR FAMILY"/>
    <property type="match status" value="1"/>
</dbReference>
<dbReference type="PANTHER" id="PTHR33238:SF11">
    <property type="entry name" value="TRANSCRIPTIONAL REGULATOR MNTR"/>
    <property type="match status" value="1"/>
</dbReference>
<dbReference type="Pfam" id="PF02742">
    <property type="entry name" value="Fe_dep_repr_C"/>
    <property type="match status" value="1"/>
</dbReference>
<dbReference type="Pfam" id="PF01325">
    <property type="entry name" value="Fe_dep_repress"/>
    <property type="match status" value="1"/>
</dbReference>
<dbReference type="SMART" id="SM00529">
    <property type="entry name" value="HTH_DTXR"/>
    <property type="match status" value="1"/>
</dbReference>
<dbReference type="SUPFAM" id="SSF47979">
    <property type="entry name" value="Iron-dependent repressor protein, dimerization domain"/>
    <property type="match status" value="1"/>
</dbReference>
<dbReference type="SUPFAM" id="SSF46785">
    <property type="entry name" value="Winged helix' DNA-binding domain"/>
    <property type="match status" value="1"/>
</dbReference>
<dbReference type="PROSITE" id="PS50944">
    <property type="entry name" value="HTH_DTXR"/>
    <property type="match status" value="1"/>
</dbReference>
<reference key="1">
    <citation type="journal article" date="1996" name="Microbiology">
        <title>Systematic sequencing of the 283 kb 210 degrees-232 degrees region of the Bacillus subtilis genome containing the skin element and many sporulation genes.</title>
        <authorList>
            <person name="Mizuno M."/>
            <person name="Masuda S."/>
            <person name="Takemaru K."/>
            <person name="Hosono S."/>
            <person name="Sato T."/>
            <person name="Takeuchi M."/>
            <person name="Kobayashi Y."/>
        </authorList>
    </citation>
    <scope>NUCLEOTIDE SEQUENCE [GENOMIC DNA]</scope>
    <source>
        <strain>168 / JH642</strain>
    </source>
</reference>
<reference key="2">
    <citation type="journal article" date="1997" name="Nature">
        <title>The complete genome sequence of the Gram-positive bacterium Bacillus subtilis.</title>
        <authorList>
            <person name="Kunst F."/>
            <person name="Ogasawara N."/>
            <person name="Moszer I."/>
            <person name="Albertini A.M."/>
            <person name="Alloni G."/>
            <person name="Azevedo V."/>
            <person name="Bertero M.G."/>
            <person name="Bessieres P."/>
            <person name="Bolotin A."/>
            <person name="Borchert S."/>
            <person name="Borriss R."/>
            <person name="Boursier L."/>
            <person name="Brans A."/>
            <person name="Braun M."/>
            <person name="Brignell S.C."/>
            <person name="Bron S."/>
            <person name="Brouillet S."/>
            <person name="Bruschi C.V."/>
            <person name="Caldwell B."/>
            <person name="Capuano V."/>
            <person name="Carter N.M."/>
            <person name="Choi S.-K."/>
            <person name="Codani J.-J."/>
            <person name="Connerton I.F."/>
            <person name="Cummings N.J."/>
            <person name="Daniel R.A."/>
            <person name="Denizot F."/>
            <person name="Devine K.M."/>
            <person name="Duesterhoeft A."/>
            <person name="Ehrlich S.D."/>
            <person name="Emmerson P.T."/>
            <person name="Entian K.-D."/>
            <person name="Errington J."/>
            <person name="Fabret C."/>
            <person name="Ferrari E."/>
            <person name="Foulger D."/>
            <person name="Fritz C."/>
            <person name="Fujita M."/>
            <person name="Fujita Y."/>
            <person name="Fuma S."/>
            <person name="Galizzi A."/>
            <person name="Galleron N."/>
            <person name="Ghim S.-Y."/>
            <person name="Glaser P."/>
            <person name="Goffeau A."/>
            <person name="Golightly E.J."/>
            <person name="Grandi G."/>
            <person name="Guiseppi G."/>
            <person name="Guy B.J."/>
            <person name="Haga K."/>
            <person name="Haiech J."/>
            <person name="Harwood C.R."/>
            <person name="Henaut A."/>
            <person name="Hilbert H."/>
            <person name="Holsappel S."/>
            <person name="Hosono S."/>
            <person name="Hullo M.-F."/>
            <person name="Itaya M."/>
            <person name="Jones L.-M."/>
            <person name="Joris B."/>
            <person name="Karamata D."/>
            <person name="Kasahara Y."/>
            <person name="Klaerr-Blanchard M."/>
            <person name="Klein C."/>
            <person name="Kobayashi Y."/>
            <person name="Koetter P."/>
            <person name="Koningstein G."/>
            <person name="Krogh S."/>
            <person name="Kumano M."/>
            <person name="Kurita K."/>
            <person name="Lapidus A."/>
            <person name="Lardinois S."/>
            <person name="Lauber J."/>
            <person name="Lazarevic V."/>
            <person name="Lee S.-M."/>
            <person name="Levine A."/>
            <person name="Liu H."/>
            <person name="Masuda S."/>
            <person name="Mauel C."/>
            <person name="Medigue C."/>
            <person name="Medina N."/>
            <person name="Mellado R.P."/>
            <person name="Mizuno M."/>
            <person name="Moestl D."/>
            <person name="Nakai S."/>
            <person name="Noback M."/>
            <person name="Noone D."/>
            <person name="O'Reilly M."/>
            <person name="Ogawa K."/>
            <person name="Ogiwara A."/>
            <person name="Oudega B."/>
            <person name="Park S.-H."/>
            <person name="Parro V."/>
            <person name="Pohl T.M."/>
            <person name="Portetelle D."/>
            <person name="Porwollik S."/>
            <person name="Prescott A.M."/>
            <person name="Presecan E."/>
            <person name="Pujic P."/>
            <person name="Purnelle B."/>
            <person name="Rapoport G."/>
            <person name="Rey M."/>
            <person name="Reynolds S."/>
            <person name="Rieger M."/>
            <person name="Rivolta C."/>
            <person name="Rocha E."/>
            <person name="Roche B."/>
            <person name="Rose M."/>
            <person name="Sadaie Y."/>
            <person name="Sato T."/>
            <person name="Scanlan E."/>
            <person name="Schleich S."/>
            <person name="Schroeter R."/>
            <person name="Scoffone F."/>
            <person name="Sekiguchi J."/>
            <person name="Sekowska A."/>
            <person name="Seror S.J."/>
            <person name="Serror P."/>
            <person name="Shin B.-S."/>
            <person name="Soldo B."/>
            <person name="Sorokin A."/>
            <person name="Tacconi E."/>
            <person name="Takagi T."/>
            <person name="Takahashi H."/>
            <person name="Takemaru K."/>
            <person name="Takeuchi M."/>
            <person name="Tamakoshi A."/>
            <person name="Tanaka T."/>
            <person name="Terpstra P."/>
            <person name="Tognoni A."/>
            <person name="Tosato V."/>
            <person name="Uchiyama S."/>
            <person name="Vandenbol M."/>
            <person name="Vannier F."/>
            <person name="Vassarotti A."/>
            <person name="Viari A."/>
            <person name="Wambutt R."/>
            <person name="Wedler E."/>
            <person name="Wedler H."/>
            <person name="Weitzenegger T."/>
            <person name="Winters P."/>
            <person name="Wipat A."/>
            <person name="Yamamoto H."/>
            <person name="Yamane K."/>
            <person name="Yasumoto K."/>
            <person name="Yata K."/>
            <person name="Yoshida K."/>
            <person name="Yoshikawa H.-F."/>
            <person name="Zumstein E."/>
            <person name="Yoshikawa H."/>
            <person name="Danchin A."/>
        </authorList>
    </citation>
    <scope>NUCLEOTIDE SEQUENCE [LARGE SCALE GENOMIC DNA]</scope>
    <source>
        <strain>168</strain>
    </source>
</reference>
<reference key="3">
    <citation type="journal article" date="2009" name="Microbiology">
        <title>From a consortium sequence to a unified sequence: the Bacillus subtilis 168 reference genome a decade later.</title>
        <authorList>
            <person name="Barbe V."/>
            <person name="Cruveiller S."/>
            <person name="Kunst F."/>
            <person name="Lenoble P."/>
            <person name="Meurice G."/>
            <person name="Sekowska A."/>
            <person name="Vallenet D."/>
            <person name="Wang T."/>
            <person name="Moszer I."/>
            <person name="Medigue C."/>
            <person name="Danchin A."/>
        </authorList>
    </citation>
    <scope>SEQUENCE REVISION TO 81</scope>
</reference>
<reference key="4">
    <citation type="journal article" date="2000" name="Mol. Microbiol.">
        <title>Manganese homeostasis in Bacillus subtilis is regulated by MntR, a bifunctional regulator related to the diphtheria toxin repressor family of proteins.</title>
        <authorList>
            <person name="Que Q."/>
            <person name="Helmann J.D."/>
        </authorList>
    </citation>
    <scope>FUNCTION</scope>
    <scope>DISRUPTION PHENOTYPE</scope>
    <source>
        <strain>168</strain>
    </source>
</reference>
<reference key="5">
    <citation type="journal article" date="2003" name="Biochemistry">
        <title>DNA-binding and oligomerization studies of the manganese(II) metalloregulatory protein MntR from Bacillus subtilis.</title>
        <authorList>
            <person name="Lieser S.A."/>
            <person name="Davis T.C."/>
            <person name="Helmann J.D."/>
            <person name="Cohen S.M."/>
        </authorList>
    </citation>
    <scope>ACTIVITY REGULATION</scope>
    <scope>DNA-BINDING</scope>
    <scope>SUBUNIT</scope>
</reference>
<reference key="6">
    <citation type="journal article" date="2003" name="Mol. Microbiol.">
        <title>The global transcriptional response of Bacillus subtilis to manganese involves the MntR, Fur, TnrA and sigmaB regulons.</title>
        <authorList>
            <person name="Guedon E."/>
            <person name="Moore C.M."/>
            <person name="Que Q."/>
            <person name="Wang T."/>
            <person name="Ye R.W."/>
            <person name="Helmann J.D."/>
        </authorList>
    </citation>
    <scope>FUNCTION</scope>
    <scope>DNA-BINDING</scope>
</reference>
<reference key="7">
    <citation type="journal article" date="2017" name="Mol. Microbiol.">
        <title>Bacillus subtilis MntR coordinates the transcriptional regulation of manganese uptake and efflux systems.</title>
        <authorList>
            <person name="Huang X."/>
            <person name="Shin J.H."/>
            <person name="Pinochet-Barros A."/>
            <person name="Su T.T."/>
            <person name="Helmann J.D."/>
        </authorList>
    </citation>
    <scope>FUNCTION</scope>
    <scope>DNA-BINDING</scope>
    <scope>DISRUPTION PHENOTYPE</scope>
</reference>
<reference evidence="16 17" key="8">
    <citation type="journal article" date="2003" name="Nat. Struct. Biol.">
        <title>Structure of the manganese-bound manganese transport regulator of Bacillus subtilis.</title>
        <authorList>
            <person name="Glasfeld A."/>
            <person name="Guedon E."/>
            <person name="Helmann J.D."/>
            <person name="Brennan R.G."/>
        </authorList>
    </citation>
    <scope>X-RAY CRYSTALLOGRAPHY (1.61 ANGSTROMS) OF WILD-TYPE AND MUTANT MET-8 IN COMPLEX WITH MANGANESE</scope>
    <scope>SUBUNIT</scope>
    <scope>DOMAIN</scope>
    <scope>MUTAGENESIS OF ASP-8</scope>
</reference>
<reference evidence="18 19 20 21 22 23 24" key="9">
    <citation type="journal article" date="2006" name="Biochemistry">
        <title>Structural basis for the metal-selective activation of the manganese transport regulator of Bacillus subtilis.</title>
        <authorList>
            <person name="Kliegman J.I."/>
            <person name="Griner S.L."/>
            <person name="Helmann J.D."/>
            <person name="Brennan R.G."/>
            <person name="Glasfeld A."/>
        </authorList>
    </citation>
    <scope>X-RAY CRYSTALLOGRAPHY (1.65 ANGSTROMS) IN COMPLEXES WITH CADMIUM; CALCIUM; MANGANESE AND ZINC</scope>
    <scope>DNA-BINDING</scope>
    <scope>ACTIVITY REGULATION</scope>
    <scope>SUBUNIT</scope>
    <scope>DOMAIN</scope>
</reference>
<reference evidence="25 26" key="10">
    <citation type="journal article" date="2007" name="J. Mol. Biol.">
        <title>The conformations of the manganese transport regulator of Bacillus subtilis in its metal-free state.</title>
        <authorList>
            <person name="DeWitt M.A."/>
            <person name="Kliegman J.I."/>
            <person name="Helmann J.D."/>
            <person name="Brennan R.G."/>
            <person name="Farrens D.L."/>
            <person name="Glasfeld A."/>
        </authorList>
    </citation>
    <scope>X-RAY CRYSTALLOGRAPHY (2.80 ANGSTROMS)</scope>
    <scope>SUBUNIT</scope>
</reference>
<reference evidence="27 28 29 30 31 32 33" key="11">
    <citation type="journal article" date="2013" name="Biochemistry">
        <title>Roles of the A and C sites in the manganese-specific activation of MntR.</title>
        <authorList>
            <person name="McGuire A.M."/>
            <person name="Cuthbert B.J."/>
            <person name="Ma Z."/>
            <person name="Grauer-Gray K.D."/>
            <person name="Brunjes Brophy M."/>
            <person name="Spear K.A."/>
            <person name="Soonsanga S."/>
            <person name="Kliegman J.I."/>
            <person name="Griner S.L."/>
            <person name="Helmann J.D."/>
            <person name="Glasfeld A."/>
        </authorList>
    </citation>
    <scope>X-RAY CRYSTALLOGRAPHY (1.65 ANGSTROMS) OF 2-142 IN COMPLEXES WITH CADMIUM; COBALT; IRON AND MANGANESE AND OF MUTANTS LYS-11 AND ALA-77</scope>
    <scope>DNA-BINDING</scope>
    <scope>ACTIVITY REGULATION</scope>
    <scope>SUBUNIT</scope>
    <scope>DOMAIN</scope>
    <scope>MUTAGENESIS OF GLU-11 AND HIS-77</scope>
</reference>
<proteinExistence type="evidence at protein level"/>
<gene>
    <name evidence="1 10" type="primary">mntR</name>
    <name type="synonym">yqhN</name>
    <name type="ordered locus">BSU24520</name>
</gene>
<accession>P54512</accession>
<sequence>MTTPSMEDYIEQIYMLIEEKGYARVSDIAEALAVHPSSVTKMVQKLDKDEYLIYEKYRGLVLTSKGKKIGKRLVYRHELLEQFLRIIGVDEEKIYNDVEGIEHHLSWNSIDRIGDLVQYFEEDDARKKDLKSIQKKTEHHNQ</sequence>
<organism>
    <name type="scientific">Bacillus subtilis (strain 168)</name>
    <dbReference type="NCBI Taxonomy" id="224308"/>
    <lineage>
        <taxon>Bacteria</taxon>
        <taxon>Bacillati</taxon>
        <taxon>Bacillota</taxon>
        <taxon>Bacilli</taxon>
        <taxon>Bacillales</taxon>
        <taxon>Bacillaceae</taxon>
        <taxon>Bacillus</taxon>
    </lineage>
</organism>
<protein>
    <recommendedName>
        <fullName evidence="1 13">HTH-type transcriptional regulator MntR</fullName>
    </recommendedName>
    <alternativeName>
        <fullName evidence="1 12">Manganese transport regulator</fullName>
    </alternativeName>
    <alternativeName>
        <fullName evidence="11">Manganese(II) metalloregulatory protein MntR</fullName>
    </alternativeName>
</protein>
<comment type="function">
    <text evidence="2 4 9">Central regulator of manganese homeostasis that regulates the expression of both manganese uptake and efflux systems (PubMed:10760146, PubMed:12950915, PubMed:27748968). In the presence of high levels of manganese, it mediates repression of the manganese uptake systems MntH and MntABCD and activation of the efflux systems MneP and MneS. Binds with high affinity to the regulatory regions of its target genes (PubMed:12950915, PubMed:27748968). The manganese concentration required for activation of efflux is higher than that for repression of uptake (PubMed:27748968).</text>
</comment>
<comment type="activity regulation">
    <text evidence="5 6 8">DNA binding is strongly activated by Mn(2+) and Cd(2+), but it is poorly activated by non-cognate metal cations, including Co(2+), Fe(2+), Ni(2+), Ca(2+) and Zn(2+). In the strict absence of divalent transition metal ions, MntR has a low affinity for DNA.</text>
</comment>
<comment type="subunit">
    <text evidence="1 3 5 6 7 8">Homodimer.</text>
</comment>
<comment type="subcellular location">
    <subcellularLocation>
        <location evidence="1 13">Cytoplasm</location>
    </subcellularLocation>
</comment>
<comment type="domain">
    <text evidence="3 6 8">Contains an N-terminal DNA-binding domain and a C-terminal dimerization domain (PubMed:12847518, PubMed:16533030, PubMed:23298157). Contains two metal binding sites per subunit, site A (corresponding to metal ion 2) and site C (corresponding to metal ion 1), which both contribute to the metal selectivity of MntR. A large metal cation is needed at the A site to correctly orient and position the C site ligands. Smaller, non-cognate metal cations bind at the A site, but disrupt the C site, blocking the full activation of MntR. Binding at the C site also favors Mn(2+) and Cd(2+) over other metals (PubMed:16533030, PubMed:23298157).</text>
</comment>
<comment type="disruption phenotype">
    <text evidence="2 9">Null mutant is very sensitive to manganese (PubMed:10760146, PubMed:27748968). Mutant also displays increased sensitivity to cadmium (PubMed:10760146).</text>
</comment>
<comment type="similarity">
    <text evidence="1 13">Belongs to the DtxR/MntR family.</text>
</comment>
<comment type="caution">
    <text evidence="14 15">Was originally thought to act as an activator for the mntABCD operon.</text>
</comment>
<evidence type="ECO:0000255" key="1">
    <source>
        <dbReference type="HAMAP-Rule" id="MF_00732"/>
    </source>
</evidence>
<evidence type="ECO:0000269" key="2">
    <source>
    </source>
</evidence>
<evidence type="ECO:0000269" key="3">
    <source>
    </source>
</evidence>
<evidence type="ECO:0000269" key="4">
    <source>
    </source>
</evidence>
<evidence type="ECO:0000269" key="5">
    <source>
    </source>
</evidence>
<evidence type="ECO:0000269" key="6">
    <source>
    </source>
</evidence>
<evidence type="ECO:0000269" key="7">
    <source>
    </source>
</evidence>
<evidence type="ECO:0000269" key="8">
    <source>
    </source>
</evidence>
<evidence type="ECO:0000269" key="9">
    <source>
    </source>
</evidence>
<evidence type="ECO:0000303" key="10">
    <source>
    </source>
</evidence>
<evidence type="ECO:0000303" key="11">
    <source>
    </source>
</evidence>
<evidence type="ECO:0000303" key="12">
    <source>
    </source>
</evidence>
<evidence type="ECO:0000305" key="13"/>
<evidence type="ECO:0000305" key="14">
    <source>
    </source>
</evidence>
<evidence type="ECO:0000305" key="15">
    <source>
    </source>
</evidence>
<evidence type="ECO:0007744" key="16">
    <source>
        <dbReference type="PDB" id="1ON1"/>
    </source>
</evidence>
<evidence type="ECO:0007744" key="17">
    <source>
        <dbReference type="PDB" id="1ON2"/>
    </source>
</evidence>
<evidence type="ECO:0007744" key="18">
    <source>
        <dbReference type="PDB" id="2EV0"/>
    </source>
</evidence>
<evidence type="ECO:0007744" key="19">
    <source>
        <dbReference type="PDB" id="2EV5"/>
    </source>
</evidence>
<evidence type="ECO:0007744" key="20">
    <source>
        <dbReference type="PDB" id="2EV6"/>
    </source>
</evidence>
<evidence type="ECO:0007744" key="21">
    <source>
        <dbReference type="PDB" id="2F5C"/>
    </source>
</evidence>
<evidence type="ECO:0007744" key="22">
    <source>
        <dbReference type="PDB" id="2F5D"/>
    </source>
</evidence>
<evidence type="ECO:0007744" key="23">
    <source>
        <dbReference type="PDB" id="2F5E"/>
    </source>
</evidence>
<evidence type="ECO:0007744" key="24">
    <source>
        <dbReference type="PDB" id="2F5F"/>
    </source>
</evidence>
<evidence type="ECO:0007744" key="25">
    <source>
        <dbReference type="PDB" id="2HYF"/>
    </source>
</evidence>
<evidence type="ECO:0007744" key="26">
    <source>
        <dbReference type="PDB" id="2HYG"/>
    </source>
</evidence>
<evidence type="ECO:0007744" key="27">
    <source>
        <dbReference type="PDB" id="3R60"/>
    </source>
</evidence>
<evidence type="ECO:0007744" key="28">
    <source>
        <dbReference type="PDB" id="3R61"/>
    </source>
</evidence>
<evidence type="ECO:0007744" key="29">
    <source>
        <dbReference type="PDB" id="4HV5"/>
    </source>
</evidence>
<evidence type="ECO:0007744" key="30">
    <source>
        <dbReference type="PDB" id="4HV6"/>
    </source>
</evidence>
<evidence type="ECO:0007744" key="31">
    <source>
        <dbReference type="PDB" id="4HX4"/>
    </source>
</evidence>
<evidence type="ECO:0007744" key="32">
    <source>
        <dbReference type="PDB" id="4HX7"/>
    </source>
</evidence>
<evidence type="ECO:0007744" key="33">
    <source>
        <dbReference type="PDB" id="4HX8"/>
    </source>
</evidence>
<evidence type="ECO:0007829" key="34">
    <source>
        <dbReference type="PDB" id="1ON2"/>
    </source>
</evidence>
<evidence type="ECO:0007829" key="35">
    <source>
        <dbReference type="PDB" id="2F5C"/>
    </source>
</evidence>
<feature type="chain" id="PRO_0000201118" description="HTH-type transcriptional regulator MntR">
    <location>
        <begin position="1"/>
        <end position="142"/>
    </location>
</feature>
<feature type="domain" description="HTH dtxR-type" evidence="1">
    <location>
        <begin position="1"/>
        <end position="63"/>
    </location>
</feature>
<feature type="binding site" evidence="6 8">
    <location>
        <position position="8"/>
    </location>
    <ligand>
        <name>Cd(2+)</name>
        <dbReference type="ChEBI" id="CHEBI:48775"/>
        <label>1</label>
    </ligand>
</feature>
<feature type="binding site" evidence="3 6 8">
    <location>
        <position position="8"/>
    </location>
    <ligand>
        <name>Mn(2+)</name>
        <dbReference type="ChEBI" id="CHEBI:29035"/>
        <label>1</label>
    </ligand>
</feature>
<feature type="binding site" evidence="6 8">
    <location>
        <position position="11"/>
    </location>
    <ligand>
        <name>Cd(2+)</name>
        <dbReference type="ChEBI" id="CHEBI:48775"/>
        <label>2</label>
    </ligand>
</feature>
<feature type="binding site" evidence="3 6 8">
    <location>
        <position position="11"/>
    </location>
    <ligand>
        <name>Mn(2+)</name>
        <dbReference type="ChEBI" id="CHEBI:29035"/>
        <label>2</label>
    </ligand>
</feature>
<feature type="binding site" evidence="6 8">
    <location>
        <position position="77"/>
    </location>
    <ligand>
        <name>Cd(2+)</name>
        <dbReference type="ChEBI" id="CHEBI:48775"/>
        <label>2</label>
    </ligand>
</feature>
<feature type="binding site" evidence="3 6 8">
    <location>
        <position position="77"/>
    </location>
    <ligand>
        <name>Mn(2+)</name>
        <dbReference type="ChEBI" id="CHEBI:29035"/>
        <label>2</label>
    </ligand>
</feature>
<feature type="binding site" evidence="6 8">
    <location>
        <position position="99"/>
    </location>
    <ligand>
        <name>Cd(2+)</name>
        <dbReference type="ChEBI" id="CHEBI:48775"/>
        <label>1</label>
    </ligand>
</feature>
<feature type="binding site" evidence="6 8">
    <location>
        <position position="99"/>
    </location>
    <ligand>
        <name>Cd(2+)</name>
        <dbReference type="ChEBI" id="CHEBI:48775"/>
        <label>2</label>
    </ligand>
</feature>
<feature type="binding site" evidence="6 8">
    <location>
        <position position="99"/>
    </location>
    <ligand>
        <name>Mn(2+)</name>
        <dbReference type="ChEBI" id="CHEBI:29035"/>
        <label>1</label>
    </ligand>
</feature>
<feature type="binding site" evidence="3 6 8">
    <location>
        <position position="99"/>
    </location>
    <ligand>
        <name>Mn(2+)</name>
        <dbReference type="ChEBI" id="CHEBI:29035"/>
        <label>2</label>
    </ligand>
</feature>
<feature type="binding site" evidence="6 8">
    <location>
        <position position="102"/>
    </location>
    <ligand>
        <name>Cd(2+)</name>
        <dbReference type="ChEBI" id="CHEBI:48775"/>
        <label>1</label>
    </ligand>
</feature>
<feature type="binding site" evidence="6 8">
    <location>
        <position position="102"/>
    </location>
    <ligand>
        <name>Cd(2+)</name>
        <dbReference type="ChEBI" id="CHEBI:48775"/>
        <label>2</label>
    </ligand>
</feature>
<feature type="binding site" evidence="3 6 8">
    <location>
        <position position="102"/>
    </location>
    <ligand>
        <name>Mn(2+)</name>
        <dbReference type="ChEBI" id="CHEBI:29035"/>
        <label>1</label>
    </ligand>
</feature>
<feature type="binding site" evidence="3 6 8">
    <location>
        <position position="102"/>
    </location>
    <ligand>
        <name>Mn(2+)</name>
        <dbReference type="ChEBI" id="CHEBI:29035"/>
        <label>2</label>
    </ligand>
</feature>
<feature type="binding site" evidence="6 8">
    <location>
        <position position="103"/>
    </location>
    <ligand>
        <name>Cd(2+)</name>
        <dbReference type="ChEBI" id="CHEBI:48775"/>
        <label>1</label>
    </ligand>
</feature>
<feature type="binding site" evidence="3 6 8">
    <location>
        <position position="103"/>
    </location>
    <ligand>
        <name>Mn(2+)</name>
        <dbReference type="ChEBI" id="CHEBI:29035"/>
        <label>1</label>
    </ligand>
</feature>
<feature type="mutagenesis site" description="Binds only one manganese ion, in a pseudo-hexacoordinate geometry." evidence="3">
    <original>D</original>
    <variation>M</variation>
    <location>
        <position position="8"/>
    </location>
</feature>
<feature type="mutagenesis site" description="Retains selectivity for activation by Mn(2+) and Cd(2+) over Co(2+) and Fe(2+). Can bind Mn(2+) in the C site, despite alteration to the A site, and adopt active DNA-binding conformations. Non-cognate ions fail to generate fully active complexes." evidence="8">
    <original>E</original>
    <variation>K</variation>
    <location>
        <position position="11"/>
    </location>
</feature>
<feature type="mutagenesis site" description="Retains selectivity for activation by Mn(2+) and Cd(2+) over Co(2+) and Fe(2+). Can bind Mn(2+) in the C site, despite alteration to the A site, and adopt active DNA-binding conformations. Non-cognate ions fail to generate fully active complexes." evidence="8">
    <original>H</original>
    <variation>A</variation>
    <location>
        <position position="77"/>
    </location>
</feature>
<feature type="sequence conflict" description="In Ref. 1; BAA12551." evidence="13" ref="1">
    <original>E</original>
    <variation>D</variation>
    <location>
        <position position="81"/>
    </location>
</feature>
<feature type="helix" evidence="34">
    <location>
        <begin position="4"/>
        <end position="20"/>
    </location>
</feature>
<feature type="helix" evidence="34">
    <location>
        <begin position="25"/>
        <end position="32"/>
    </location>
</feature>
<feature type="helix" evidence="34">
    <location>
        <begin position="36"/>
        <end position="48"/>
    </location>
</feature>
<feature type="strand" evidence="34">
    <location>
        <begin position="51"/>
        <end position="55"/>
    </location>
</feature>
<feature type="turn" evidence="34">
    <location>
        <begin position="56"/>
        <end position="58"/>
    </location>
</feature>
<feature type="strand" evidence="34">
    <location>
        <begin position="59"/>
        <end position="62"/>
    </location>
</feature>
<feature type="helix" evidence="34">
    <location>
        <begin position="64"/>
        <end position="86"/>
    </location>
</feature>
<feature type="helix" evidence="34">
    <location>
        <begin position="91"/>
        <end position="101"/>
    </location>
</feature>
<feature type="helix" evidence="34">
    <location>
        <begin position="102"/>
        <end position="104"/>
    </location>
</feature>
<feature type="helix" evidence="34">
    <location>
        <begin position="107"/>
        <end position="121"/>
    </location>
</feature>
<feature type="helix" evidence="34">
    <location>
        <begin position="124"/>
        <end position="134"/>
    </location>
</feature>
<feature type="helix" evidence="35">
    <location>
        <begin position="139"/>
        <end position="141"/>
    </location>
</feature>
<name>MNTR_BACSU</name>